<sequence length="132" mass="14831">MRHKCLLAMAVVASMAFYSVISTKNVTQVDTVQQENRRLRPRVEPTANELDKQSDVDTKLEADRRLGYPGESGFMLEGELEERGGFPWRTFFLGLFASVIEERGGFPWRTFFLGLFASVIGVSIISACYGIT</sequence>
<comment type="function">
    <text evidence="4">Secreted effector that inhibits stress-induced relocalization of the transcription factor NAC069 to the nucleus, thus affecting its broad role in abiotic and biotic stress responses.</text>
</comment>
<comment type="subunit">
    <text evidence="4">Interacts with host transcription factor NAC069.</text>
</comment>
<comment type="subcellular location">
    <subcellularLocation>
        <location evidence="4">Secreted</location>
    </subcellularLocation>
    <subcellularLocation>
        <location evidence="4">Host endoplasmic reticulum membrane</location>
        <topology evidence="1">Single-pass type I membrane protein</topology>
    </subcellularLocation>
</comment>
<comment type="domain">
    <text evidence="7">The RxLR-dEER motif acts to carry the protein into the host cell cytoplasm through binding to cell surface phosphatidylinositol-3-phosphate.</text>
</comment>
<comment type="similarity">
    <text evidence="6">Belongs to the RxLR effector family.</text>
</comment>
<name>BRL09_BRELC</name>
<evidence type="ECO:0000255" key="1"/>
<evidence type="ECO:0000255" key="2">
    <source>
        <dbReference type="PROSITE-ProRule" id="PRU00498"/>
    </source>
</evidence>
<evidence type="ECO:0000256" key="3">
    <source>
        <dbReference type="SAM" id="MobiDB-lite"/>
    </source>
</evidence>
<evidence type="ECO:0000269" key="4">
    <source>
    </source>
</evidence>
<evidence type="ECO:0000303" key="5">
    <source>
    </source>
</evidence>
<evidence type="ECO:0000305" key="6"/>
<evidence type="ECO:0000305" key="7">
    <source>
    </source>
</evidence>
<accession>P0CU88</accession>
<protein>
    <recommendedName>
        <fullName evidence="5">Secreted RxLR effector protein BLR08</fullName>
    </recommendedName>
</protein>
<proteinExistence type="evidence at protein level"/>
<feature type="signal peptide" evidence="1">
    <location>
        <begin position="1"/>
        <end position="22"/>
    </location>
</feature>
<feature type="chain" id="PRO_0000447900" description="Secreted RxLR effector protein BLR08">
    <location>
        <begin position="23"/>
        <end position="132"/>
    </location>
</feature>
<feature type="transmembrane region" description="Helical" evidence="1">
    <location>
        <begin position="111"/>
        <end position="131"/>
    </location>
</feature>
<feature type="region of interest" description="Disordered" evidence="3">
    <location>
        <begin position="36"/>
        <end position="57"/>
    </location>
</feature>
<feature type="short sequence motif" description="RxLR-dEER" evidence="7">
    <location>
        <begin position="37"/>
        <end position="83"/>
    </location>
</feature>
<feature type="glycosylation site" description="N-linked (GlcNAc...) asparagine" evidence="2">
    <location>
        <position position="25"/>
    </location>
</feature>
<reference key="1">
    <citation type="journal article" date="2013" name="Mol. Plant Microbe Interact.">
        <title>Specific in planta recognition of two GKLR proteins of the downy mildew Bremia lactucae revealed in a large effector screen in lettuce.</title>
        <authorList>
            <person name="Stassen J.H."/>
            <person name="den Boer E."/>
            <person name="Vergeer P.W."/>
            <person name="Andel A."/>
            <person name="Ellendorff U."/>
            <person name="Pelgrom K."/>
            <person name="Pel M."/>
            <person name="Schut J."/>
            <person name="Zonneveld O."/>
            <person name="Jeuken M.J."/>
            <person name="Van den Ackerveken G."/>
        </authorList>
    </citation>
    <scope>NUCLEOTIDE SEQUENCE [MRNA]</scope>
    <scope>DOMAIN</scope>
</reference>
<reference key="2">
    <citation type="journal article" date="2019" name="Plant J.">
        <title>Multiple downy mildew effectors target the stress-related NAC transcription factor LsNAC069 in lettuce.</title>
        <authorList>
            <person name="Meisrimler C.N."/>
            <person name="Pelgrom A.J.E."/>
            <person name="Oud B."/>
            <person name="Out S."/>
            <person name="Van den Ackerveken G."/>
        </authorList>
    </citation>
    <scope>INTERACTION WITH NAC069</scope>
    <scope>SUBCELLULAR LOCATION</scope>
    <scope>FUNCTION</scope>
</reference>
<keyword id="KW-0325">Glycoprotein</keyword>
<keyword id="KW-1038">Host endoplasmic reticulum</keyword>
<keyword id="KW-1043">Host membrane</keyword>
<keyword id="KW-0472">Membrane</keyword>
<keyword id="KW-0964">Secreted</keyword>
<keyword id="KW-0732">Signal</keyword>
<keyword id="KW-0812">Transmembrane</keyword>
<keyword id="KW-1133">Transmembrane helix</keyword>
<dbReference type="GlyCosmos" id="P0CU88">
    <property type="glycosylation" value="1 site, No reported glycans"/>
</dbReference>
<dbReference type="VEuPathDB" id="FungiDB:CCR75_008377"/>
<dbReference type="GO" id="GO:0005576">
    <property type="term" value="C:extracellular region"/>
    <property type="evidence" value="ECO:0007669"/>
    <property type="project" value="UniProtKB-SubCell"/>
</dbReference>
<dbReference type="GO" id="GO:0044167">
    <property type="term" value="C:host cell endoplasmic reticulum membrane"/>
    <property type="evidence" value="ECO:0007669"/>
    <property type="project" value="UniProtKB-SubCell"/>
</dbReference>
<dbReference type="GO" id="GO:0016020">
    <property type="term" value="C:membrane"/>
    <property type="evidence" value="ECO:0007669"/>
    <property type="project" value="UniProtKB-KW"/>
</dbReference>
<organism>
    <name type="scientific">Bremia lactucae</name>
    <name type="common">Lettuce downy mildew</name>
    <dbReference type="NCBI Taxonomy" id="4779"/>
    <lineage>
        <taxon>Eukaryota</taxon>
        <taxon>Sar</taxon>
        <taxon>Stramenopiles</taxon>
        <taxon>Oomycota</taxon>
        <taxon>Peronosporales</taxon>
        <taxon>Peronosporaceae</taxon>
        <taxon>Bremia</taxon>
    </lineage>
</organism>
<gene>
    <name evidence="5" type="primary">BLR09</name>
</gene>